<gene>
    <name evidence="10" type="primary">Grin3b</name>
</gene>
<evidence type="ECO:0000250" key="1">
    <source>
        <dbReference type="UniProtKB" id="Q13224"/>
    </source>
</evidence>
<evidence type="ECO:0000250" key="2">
    <source>
        <dbReference type="UniProtKB" id="Q8VHN2"/>
    </source>
</evidence>
<evidence type="ECO:0000255" key="3"/>
<evidence type="ECO:0000256" key="4">
    <source>
        <dbReference type="SAM" id="MobiDB-lite"/>
    </source>
</evidence>
<evidence type="ECO:0000269" key="5">
    <source>
    </source>
</evidence>
<evidence type="ECO:0000269" key="6">
    <source>
    </source>
</evidence>
<evidence type="ECO:0000269" key="7">
    <source>
    </source>
</evidence>
<evidence type="ECO:0000303" key="8">
    <source>
    </source>
</evidence>
<evidence type="ECO:0000305" key="9"/>
<evidence type="ECO:0000312" key="10">
    <source>
        <dbReference type="MGI" id="MGI:2150393"/>
    </source>
</evidence>
<protein>
    <recommendedName>
        <fullName evidence="9">Glutamate receptor ionotropic, NMDA 3B</fullName>
        <shortName>GluN3B</shortName>
    </recommendedName>
    <alternativeName>
        <fullName>N-methyl-D-aspartate receptor subunit NR3B</fullName>
        <shortName>NMDAR3B</shortName>
        <shortName evidence="8">NR3B</shortName>
    </alternativeName>
    <alternativeName>
        <fullName>NMDA receptor 4</fullName>
        <shortName>Nr4</shortName>
    </alternativeName>
</protein>
<sequence length="1003" mass="109158">MECVQTLWLSLALALARGSWVVRGHPQPCGVPTRAGASVRLAALLPRAPAARARVLAALATPSPRLPHNLSLELVAVASPTRDPASLARGLCQVLAPPGVVASITFPEARPELRLLQFLAAATETPVLSVLRREVRAPLGAPTPFHLQLDWASPLETILDVLVSLVRAHAWEDIALVLCRVRDPSGLVTLWTSRASQAPKFVLDLSQLDSGNDSLRATLALLGTLEGGGTPVSAAVLLGCSTAHAHEVLEAAPPGPQWLLGTPLPAEALPKTGLPPGVLVLGETGQPSLEAAVHDMVELVARALSSMALMHPERALLPAAVNCEDLKTGGSESTARTLARFLSNTSFQGRTGAVWVAGSSQVHVSRHFKVWSLRRDPLGAPAWATVGSWQDGQLDFQPGAAALRVPSPSGTQARPKLRVVTLVEHPFVFTRESDEDGQCPAGQLCLDPGTNDSARLDALFTALENGSVPRTLRRCCYGYCIDLLERLAEDLAFDFELYIVGDGKYGALRDGRWTGLVGDLLAGRAHMAVTSFSINSARSQVVDFTSPFFSTSLGIMVRTRDTASPIGAFMWPLHWSMWVGVFAALHLTALFLTLYEWRSPYGLTPRGRNRGTVFSYSSALNLCYAILFGRTVSSKTPKCPTGRFLMNLWAIFCLLVLSSYTANLAAVMVGDKTFEELSGIHDPKLHHPSQGFRFGTVWESSAEAYIKASFPEMHAHMRRHSAPTTPHGVAMLTSDPPKLNAFIMDKSLLDYEVSIDADCKLLTVGKPFAIEGYGIGLPQNSPLTSNLSEFISRYKSSGFIDLLHDKWYKMVPCGKRVFAVTETLQMGVYHLSGLFVLLCLGLGSALLTSLGEHVFYRLVLPRIRRGNKLQYWLHTSQKIHRALNTGPPEGQQERAEQECSGPKEEQPAADGAGRWRRVRRAVVERERRVRFLLEPGEAGGDHPWLCSNGPGVQAELRELELRIEAARERLRSALLRRGELRAQLGDGTRLRPLRLLHAAPAES</sequence>
<name>NMD3B_MOUSE</name>
<dbReference type="EMBL" id="AF396649">
    <property type="protein sequence ID" value="AAL10018.1"/>
    <property type="molecule type" value="mRNA"/>
</dbReference>
<dbReference type="EMBL" id="AY062435">
    <property type="protein sequence ID" value="AAL38983.1"/>
    <property type="molecule type" value="mRNA"/>
</dbReference>
<dbReference type="EMBL" id="AF373861">
    <property type="protein sequence ID" value="AAL40418.1"/>
    <property type="molecule type" value="mRNA"/>
</dbReference>
<dbReference type="CCDS" id="CCDS24001.1"/>
<dbReference type="RefSeq" id="NP_569722.1">
    <property type="nucleotide sequence ID" value="NM_130455.2"/>
</dbReference>
<dbReference type="SMR" id="Q91ZU9"/>
<dbReference type="CORUM" id="Q91ZU9"/>
<dbReference type="FunCoup" id="Q91ZU9">
    <property type="interactions" value="660"/>
</dbReference>
<dbReference type="STRING" id="10090.ENSMUSP00000048576"/>
<dbReference type="ChEMBL" id="CHEMBL3832634"/>
<dbReference type="GlyCosmos" id="Q91ZU9">
    <property type="glycosylation" value="6 sites, No reported glycans"/>
</dbReference>
<dbReference type="GlyGen" id="Q91ZU9">
    <property type="glycosylation" value="7 sites, 3 N-linked glycans (4 sites)"/>
</dbReference>
<dbReference type="iPTMnet" id="Q91ZU9"/>
<dbReference type="PhosphoSitePlus" id="Q91ZU9"/>
<dbReference type="jPOST" id="Q91ZU9"/>
<dbReference type="PaxDb" id="10090-ENSMUSP00000048576"/>
<dbReference type="ProteomicsDB" id="293689"/>
<dbReference type="Antibodypedia" id="10301">
    <property type="antibodies" value="154 antibodies from 26 providers"/>
</dbReference>
<dbReference type="DNASU" id="170483"/>
<dbReference type="Ensembl" id="ENSMUST00000045085.8">
    <property type="protein sequence ID" value="ENSMUSP00000048576.2"/>
    <property type="gene ID" value="ENSMUSG00000035745.10"/>
</dbReference>
<dbReference type="GeneID" id="170483"/>
<dbReference type="KEGG" id="mmu:170483"/>
<dbReference type="UCSC" id="uc007gau.1">
    <property type="organism name" value="mouse"/>
</dbReference>
<dbReference type="AGR" id="MGI:2150393"/>
<dbReference type="CTD" id="116444"/>
<dbReference type="MGI" id="MGI:2150393">
    <property type="gene designation" value="Grin3b"/>
</dbReference>
<dbReference type="VEuPathDB" id="HostDB:ENSMUSG00000035745"/>
<dbReference type="eggNOG" id="KOG1053">
    <property type="taxonomic scope" value="Eukaryota"/>
</dbReference>
<dbReference type="GeneTree" id="ENSGT00940000161021"/>
<dbReference type="HOGENOM" id="CLU_002039_0_1_1"/>
<dbReference type="InParanoid" id="Q91ZU9"/>
<dbReference type="OMA" id="NCGDLQP"/>
<dbReference type="OrthoDB" id="5984008at2759"/>
<dbReference type="PhylomeDB" id="Q91ZU9"/>
<dbReference type="TreeFam" id="TF314731"/>
<dbReference type="BioGRID-ORCS" id="170483">
    <property type="hits" value="2 hits in 79 CRISPR screens"/>
</dbReference>
<dbReference type="ChiTaRS" id="Grin3b">
    <property type="organism name" value="mouse"/>
</dbReference>
<dbReference type="PRO" id="PR:Q91ZU9"/>
<dbReference type="Proteomes" id="UP000000589">
    <property type="component" value="Chromosome 10"/>
</dbReference>
<dbReference type="RNAct" id="Q91ZU9">
    <property type="molecule type" value="protein"/>
</dbReference>
<dbReference type="Bgee" id="ENSMUSG00000035745">
    <property type="expression patterns" value="Expressed in lumbar subsegment of spinal cord and 66 other cell types or tissues"/>
</dbReference>
<dbReference type="ExpressionAtlas" id="Q91ZU9">
    <property type="expression patterns" value="baseline and differential"/>
</dbReference>
<dbReference type="GO" id="GO:0005789">
    <property type="term" value="C:endoplasmic reticulum membrane"/>
    <property type="evidence" value="ECO:0000304"/>
    <property type="project" value="Reactome"/>
</dbReference>
<dbReference type="GO" id="GO:0043025">
    <property type="term" value="C:neuronal cell body"/>
    <property type="evidence" value="ECO:0000314"/>
    <property type="project" value="UniProtKB"/>
</dbReference>
<dbReference type="GO" id="GO:0098878">
    <property type="term" value="C:neurotransmitter receptor complex"/>
    <property type="evidence" value="ECO:0000353"/>
    <property type="project" value="UniProtKB"/>
</dbReference>
<dbReference type="GO" id="GO:0017146">
    <property type="term" value="C:NMDA selective glutamate receptor complex"/>
    <property type="evidence" value="ECO:0000315"/>
    <property type="project" value="UniProtKB"/>
</dbReference>
<dbReference type="GO" id="GO:0045211">
    <property type="term" value="C:postsynaptic membrane"/>
    <property type="evidence" value="ECO:0007669"/>
    <property type="project" value="UniProtKB-SubCell"/>
</dbReference>
<dbReference type="GO" id="GO:0099507">
    <property type="term" value="F:ligand-gated monoatomic ion channel activity involved in regulation of presynaptic membrane potential"/>
    <property type="evidence" value="ECO:0007669"/>
    <property type="project" value="Ensembl"/>
</dbReference>
<dbReference type="GO" id="GO:0038023">
    <property type="term" value="F:signaling receptor activity"/>
    <property type="evidence" value="ECO:0007669"/>
    <property type="project" value="InterPro"/>
</dbReference>
<dbReference type="GO" id="GO:0070588">
    <property type="term" value="P:calcium ion transmembrane transport"/>
    <property type="evidence" value="ECO:0007669"/>
    <property type="project" value="GOC"/>
</dbReference>
<dbReference type="GO" id="GO:0051205">
    <property type="term" value="P:protein insertion into membrane"/>
    <property type="evidence" value="ECO:0000315"/>
    <property type="project" value="UniProtKB"/>
</dbReference>
<dbReference type="GO" id="GO:0051924">
    <property type="term" value="P:regulation of calcium ion transport"/>
    <property type="evidence" value="ECO:0000315"/>
    <property type="project" value="UniProtKB"/>
</dbReference>
<dbReference type="GO" id="GO:0048167">
    <property type="term" value="P:regulation of synaptic plasticity"/>
    <property type="evidence" value="ECO:0000314"/>
    <property type="project" value="UniProtKB"/>
</dbReference>
<dbReference type="CDD" id="cd06377">
    <property type="entry name" value="PBP1_iGluR_NMDA_NR3"/>
    <property type="match status" value="1"/>
</dbReference>
<dbReference type="CDD" id="cd13720">
    <property type="entry name" value="PBP2_iGluR_NMDA_Nr3"/>
    <property type="match status" value="1"/>
</dbReference>
<dbReference type="FunFam" id="3.40.190.10:FF:000078">
    <property type="entry name" value="glutamate receptor ionotropic, NMDA 3B"/>
    <property type="match status" value="1"/>
</dbReference>
<dbReference type="FunFam" id="3.40.190.10:FF:000045">
    <property type="entry name" value="Putative glutamate receptor ionotropic NMDA 3A"/>
    <property type="match status" value="1"/>
</dbReference>
<dbReference type="Gene3D" id="3.40.50.2300">
    <property type="match status" value="2"/>
</dbReference>
<dbReference type="Gene3D" id="3.40.190.10">
    <property type="entry name" value="Periplasmic binding protein-like II"/>
    <property type="match status" value="3"/>
</dbReference>
<dbReference type="InterPro" id="IPR019594">
    <property type="entry name" value="Glu/Gly-bd"/>
</dbReference>
<dbReference type="InterPro" id="IPR001508">
    <property type="entry name" value="Iono_Glu_rcpt_met"/>
</dbReference>
<dbReference type="InterPro" id="IPR015683">
    <property type="entry name" value="Ionotropic_Glu_rcpt"/>
</dbReference>
<dbReference type="InterPro" id="IPR001320">
    <property type="entry name" value="Iontro_rcpt_C"/>
</dbReference>
<dbReference type="PANTHER" id="PTHR18966">
    <property type="entry name" value="IONOTROPIC GLUTAMATE RECEPTOR"/>
    <property type="match status" value="1"/>
</dbReference>
<dbReference type="Pfam" id="PF00060">
    <property type="entry name" value="Lig_chan"/>
    <property type="match status" value="1"/>
</dbReference>
<dbReference type="Pfam" id="PF10613">
    <property type="entry name" value="Lig_chan-Glu_bd"/>
    <property type="match status" value="1"/>
</dbReference>
<dbReference type="PRINTS" id="PR00177">
    <property type="entry name" value="NMDARECEPTOR"/>
</dbReference>
<dbReference type="SMART" id="SM00918">
    <property type="entry name" value="Lig_chan-Glu_bd"/>
    <property type="match status" value="1"/>
</dbReference>
<dbReference type="SMART" id="SM00079">
    <property type="entry name" value="PBPe"/>
    <property type="match status" value="1"/>
</dbReference>
<dbReference type="SUPFAM" id="SSF53850">
    <property type="entry name" value="Periplasmic binding protein-like II"/>
    <property type="match status" value="1"/>
</dbReference>
<comment type="function">
    <text evidence="2 5 6 7">Component of a non-conventional N-methyl-D-aspartate (NMDA) receptors (NMDARs) that function as heterotetrameric, ligand-gated cation channels with low calcium permeability and low voltage-dependent block by Mg(2+) (PubMed:11717388, PubMed:12008020, PubMed:14602821). Forms glutamatergic receptor complexes with GluN1 and GluN2 subunits which are activated by glycine binding to the GluN1 and GluN3 subunits and L-glutamate binding to GluN2 subunits (PubMed:11717388). Forms excitatory glycinergic receptor complexes with GluN1 alone which are activated by glycine binding to the GluN1 and GluN3 subunits (By similarity). GluN3B subunit also binds D-serine and, in the absence of glycine, activates glycinergic receptor complexes, but with lower efficacy than glycine (By similarity). Each GluN3 subunit confers differential attributes to channel properties, including activation, deactivation and desensitization kinetics, pH sensitivity, Ca2(+) permeability, and binding to allosteric modulators (PubMed:12008020).</text>
</comment>
<comment type="catalytic activity">
    <reaction evidence="6 7">
        <text>Ca(2+)(in) = Ca(2+)(out)</text>
        <dbReference type="Rhea" id="RHEA:29671"/>
        <dbReference type="ChEBI" id="CHEBI:29108"/>
    </reaction>
</comment>
<comment type="catalytic activity">
    <reaction evidence="2">
        <text>Na(+)(in) = Na(+)(out)</text>
        <dbReference type="Rhea" id="RHEA:34963"/>
        <dbReference type="ChEBI" id="CHEBI:29101"/>
    </reaction>
</comment>
<comment type="subunit">
    <text evidence="6 7 9">Forms heterotetrameric channels that contain at least two GluN1 subunits and at least a combination of one GluN2 and one GluN3 subunits (in vitro) (PubMed:12008020, PubMed:14602821). Forms heterotetrameric channels composed of two GluN1/zeta subunits (GRIN1), and two identical GluN3 subunits (GRIN3A or GRIN3B) (in vitro) (Probable). Does not form functional homomeric channels (PubMed:12008020).</text>
</comment>
<comment type="subcellular location">
    <subcellularLocation>
        <location evidence="7">Cell membrane</location>
        <topology evidence="1">Multi-pass membrane protein</topology>
    </subcellularLocation>
    <subcellularLocation>
        <location evidence="7">Postsynaptic cell membrane</location>
    </subcellularLocation>
    <text evidence="7">Requires the presence of GRIN1 to be targeted at the plasma membrane.</text>
</comment>
<comment type="tissue specificity">
    <text evidence="5 6 7">Expressed in the facial nucleus and the ambiguus nucleus of the brainstem, pons, medulla, spinal cord and cerebellum.</text>
</comment>
<comment type="similarity">
    <text evidence="9">Belongs to the glutamate-gated ion channel (TC 1.A.10.1) family. NR3B/GRIN3B subfamily.</text>
</comment>
<feature type="signal peptide" evidence="3">
    <location>
        <begin position="1"/>
        <end position="24"/>
    </location>
</feature>
<feature type="chain" id="PRO_0000011571" description="Glutamate receptor ionotropic, NMDA 3B">
    <location>
        <begin position="25"/>
        <end position="1003"/>
    </location>
</feature>
<feature type="topological domain" description="Extracellular" evidence="9">
    <location>
        <begin position="25"/>
        <end position="574"/>
    </location>
</feature>
<feature type="transmembrane region" description="Helical" evidence="1">
    <location>
        <begin position="575"/>
        <end position="594"/>
    </location>
</feature>
<feature type="topological domain" description="Cytoplasmic" evidence="9">
    <location>
        <begin position="595"/>
        <end position="615"/>
    </location>
</feature>
<feature type="intramembrane region" description="Discontinuously helical" evidence="1">
    <location>
        <begin position="616"/>
        <end position="627"/>
    </location>
</feature>
<feature type="topological domain" description="Cytoplasmic" evidence="9">
    <location>
        <begin position="628"/>
        <end position="641"/>
    </location>
</feature>
<feature type="transmembrane region" description="Helical" evidence="1">
    <location>
        <begin position="642"/>
        <end position="661"/>
    </location>
</feature>
<feature type="topological domain" description="Extracellular" evidence="9">
    <location>
        <begin position="662"/>
        <end position="832"/>
    </location>
</feature>
<feature type="transmembrane region" description="Helical" evidence="1">
    <location>
        <begin position="833"/>
        <end position="848"/>
    </location>
</feature>
<feature type="topological domain" description="Cytoplasmic" evidence="9">
    <location>
        <begin position="849"/>
        <end position="1003"/>
    </location>
</feature>
<feature type="region of interest" description="Disordered" evidence="4">
    <location>
        <begin position="883"/>
        <end position="912"/>
    </location>
</feature>
<feature type="region of interest" description="Involved in the trafficking and surface expression of NMDARs" evidence="7">
    <location>
        <begin position="952"/>
        <end position="985"/>
    </location>
</feature>
<feature type="coiled-coil region" evidence="3">
    <location>
        <begin position="947"/>
        <end position="986"/>
    </location>
</feature>
<feature type="compositionally biased region" description="Basic and acidic residues" evidence="4">
    <location>
        <begin position="891"/>
        <end position="906"/>
    </location>
</feature>
<feature type="binding site" evidence="2">
    <location>
        <position position="531"/>
    </location>
    <ligand>
        <name>glycine</name>
        <dbReference type="ChEBI" id="CHEBI:57305"/>
    </ligand>
</feature>
<feature type="binding site" evidence="2">
    <location>
        <position position="533"/>
    </location>
    <ligand>
        <name>D-serine</name>
        <dbReference type="ChEBI" id="CHEBI:35247"/>
    </ligand>
</feature>
<feature type="binding site" evidence="2">
    <location>
        <position position="533"/>
    </location>
    <ligand>
        <name>glycine</name>
        <dbReference type="ChEBI" id="CHEBI:57305"/>
    </ligand>
</feature>
<feature type="binding site" evidence="2">
    <location>
        <position position="538"/>
    </location>
    <ligand>
        <name>D-serine</name>
        <dbReference type="ChEBI" id="CHEBI:35247"/>
    </ligand>
</feature>
<feature type="binding site" evidence="2">
    <location>
        <position position="538"/>
    </location>
    <ligand>
        <name>glycine</name>
        <dbReference type="ChEBI" id="CHEBI:57305"/>
    </ligand>
</feature>
<feature type="binding site" evidence="2">
    <location>
        <position position="701"/>
    </location>
    <ligand>
        <name>D-serine</name>
        <dbReference type="ChEBI" id="CHEBI:35247"/>
    </ligand>
</feature>
<feature type="binding site" evidence="2">
    <location>
        <position position="701"/>
    </location>
    <ligand>
        <name>glycine</name>
        <dbReference type="ChEBI" id="CHEBI:57305"/>
    </ligand>
</feature>
<feature type="binding site" evidence="2">
    <location>
        <position position="702"/>
    </location>
    <ligand>
        <name>D-serine</name>
        <dbReference type="ChEBI" id="CHEBI:35247"/>
    </ligand>
</feature>
<feature type="binding site" evidence="2">
    <location>
        <position position="745"/>
    </location>
    <ligand>
        <name>D-serine</name>
        <dbReference type="ChEBI" id="CHEBI:35247"/>
    </ligand>
</feature>
<feature type="binding site" evidence="2">
    <location>
        <position position="745"/>
    </location>
    <ligand>
        <name>glycine</name>
        <dbReference type="ChEBI" id="CHEBI:57305"/>
    </ligand>
</feature>
<feature type="glycosylation site" description="N-linked (GlcNAc...) asparagine" evidence="3">
    <location>
        <position position="69"/>
    </location>
</feature>
<feature type="glycosylation site" description="N-linked (GlcNAc...) asparagine" evidence="3">
    <location>
        <position position="212"/>
    </location>
</feature>
<feature type="glycosylation site" description="N-linked (GlcNAc...) asparagine" evidence="3">
    <location>
        <position position="344"/>
    </location>
</feature>
<feature type="glycosylation site" description="N-linked (GlcNAc...) asparagine" evidence="3">
    <location>
        <position position="451"/>
    </location>
</feature>
<feature type="glycosylation site" description="N-linked (GlcNAc...) asparagine" evidence="3">
    <location>
        <position position="465"/>
    </location>
</feature>
<feature type="glycosylation site" description="N-linked (GlcNAc...) asparagine" evidence="3">
    <location>
        <position position="786"/>
    </location>
</feature>
<feature type="disulfide bond" evidence="2">
    <location>
        <begin position="439"/>
        <end position="475"/>
    </location>
</feature>
<feature type="disulfide bond" evidence="2">
    <location>
        <begin position="445"/>
        <end position="476"/>
    </location>
</feature>
<feature type="sequence conflict" description="In Ref. 3; AAL40418." evidence="9" ref="3">
    <original>F</original>
    <variation>S</variation>
    <location>
        <position position="674"/>
    </location>
</feature>
<feature type="sequence conflict" description="In Ref. 3; AAL40418." evidence="9" ref="3">
    <original>SS</original>
    <variation>GN</variation>
    <location>
        <begin position="700"/>
        <end position="701"/>
    </location>
</feature>
<feature type="sequence conflict" description="In Ref. 3; AAL40418." evidence="9" ref="3">
    <original>G</original>
    <variation>D</variation>
    <location>
        <position position="798"/>
    </location>
</feature>
<feature type="sequence conflict" description="In Ref. 3; AAL40418." evidence="9" ref="3">
    <original>S</original>
    <variation>R</variation>
    <location>
        <position position="900"/>
    </location>
</feature>
<reference key="1">
    <citation type="journal article" date="2001" name="J. Neurosci.">
        <title>Motoneuron-specific expression of NR3B, a novel NMDA-type glutamate receptor subunit that works in a dominant-negative manner.</title>
        <authorList>
            <person name="Nishi M."/>
            <person name="Hinds H."/>
            <person name="Lu H.-P."/>
            <person name="Kawata M."/>
            <person name="Hayashi Y."/>
        </authorList>
    </citation>
    <scope>NUCLEOTIDE SEQUENCE [MRNA]</scope>
    <scope>FUNCTION</scope>
    <scope>TISSUE SPECIFICITY</scope>
    <source>
        <tissue>Spinal cord</tissue>
    </source>
</reference>
<reference key="2">
    <citation type="journal article" date="2002" name="Brain Res. Mol. Brain Res.">
        <title>Cloning and characterization of a novel NMDA receptor subunit NR3B: a dominant subunit that reduces calcium permeability.</title>
        <authorList>
            <person name="Matsuda K."/>
            <person name="Kamiya Y."/>
            <person name="Matsuda S."/>
            <person name="Yuzaki M."/>
        </authorList>
    </citation>
    <scope>NUCLEOTIDE SEQUENCE [MRNA]</scope>
    <scope>FUNCTION</scope>
    <scope>TRANSPORTER ACTIVITY</scope>
    <scope>TISSUE SPECIFICITY</scope>
    <scope>IDENTIFICATION IN A COMPLEX WITH GRIN1 AND GRIN2A OR GRIN2B</scope>
    <source>
        <strain>ICR</strain>
        <tissue>Cerebellum</tissue>
    </source>
</reference>
<reference key="3">
    <citation type="journal article" date="2001" name="Genomics">
        <title>Nucleotide sequence, genomic organization, and chromosomal localization of genes encoding the human NMDA receptor subunits NR3A and NR3B.</title>
        <authorList>
            <person name="Andersson O."/>
            <person name="Stenqvist A."/>
            <person name="Attersand A."/>
            <person name="von Euler G."/>
        </authorList>
    </citation>
    <scope>NUCLEOTIDE SEQUENCE [MRNA] OF 360-900</scope>
    <source>
        <strain>BALB/cJ</strain>
        <tissue>Brain</tissue>
    </source>
</reference>
<reference key="4">
    <citation type="submission" date="2009-01" db="UniProtKB">
        <authorList>
            <person name="Lubec G."/>
            <person name="Sunyer B."/>
            <person name="Chen W.-Q."/>
        </authorList>
    </citation>
    <scope>PROTEIN SEQUENCE OF 513-538 AND 631-643</scope>
    <scope>IDENTIFICATION BY MASS SPECTROMETRY</scope>
    <source>
        <strain>OF1</strain>
        <tissue>Hippocampus</tissue>
    </source>
</reference>
<reference key="5">
    <citation type="journal article" date="2003" name="J. Neurosci.">
        <title>Specific assembly with the NMDA receptor 3B subunit controls surface expression and calcium permeability of NMDA receptors.</title>
        <authorList>
            <person name="Matsuda K."/>
            <person name="Fletcher M."/>
            <person name="Kamiya Y."/>
            <person name="Yuzaki M."/>
        </authorList>
    </citation>
    <scope>FUNCTION</scope>
    <scope>TRANSPORTER ACTIVITY</scope>
    <scope>TISSUE SPECIFICITY</scope>
    <scope>SUBCELLULAR LOCATION</scope>
    <scope>IDENTIFICATION IN A COMPLEX WITH GRIN1 AND GRIN2A OR GRIN2B</scope>
</reference>
<keyword id="KW-0106">Calcium</keyword>
<keyword id="KW-1003">Cell membrane</keyword>
<keyword id="KW-0175">Coiled coil</keyword>
<keyword id="KW-0903">Direct protein sequencing</keyword>
<keyword id="KW-1015">Disulfide bond</keyword>
<keyword id="KW-0325">Glycoprotein</keyword>
<keyword id="KW-0407">Ion channel</keyword>
<keyword id="KW-0406">Ion transport</keyword>
<keyword id="KW-1071">Ligand-gated ion channel</keyword>
<keyword id="KW-0460">Magnesium</keyword>
<keyword id="KW-0472">Membrane</keyword>
<keyword id="KW-0628">Postsynaptic cell membrane</keyword>
<keyword id="KW-0675">Receptor</keyword>
<keyword id="KW-1185">Reference proteome</keyword>
<keyword id="KW-0732">Signal</keyword>
<keyword id="KW-0770">Synapse</keyword>
<keyword id="KW-0812">Transmembrane</keyword>
<keyword id="KW-1133">Transmembrane helix</keyword>
<keyword id="KW-0813">Transport</keyword>
<proteinExistence type="evidence at protein level"/>
<accession>Q91ZU9</accession>
<accession>Q8VHV0</accession>
<organism>
    <name type="scientific">Mus musculus</name>
    <name type="common">Mouse</name>
    <dbReference type="NCBI Taxonomy" id="10090"/>
    <lineage>
        <taxon>Eukaryota</taxon>
        <taxon>Metazoa</taxon>
        <taxon>Chordata</taxon>
        <taxon>Craniata</taxon>
        <taxon>Vertebrata</taxon>
        <taxon>Euteleostomi</taxon>
        <taxon>Mammalia</taxon>
        <taxon>Eutheria</taxon>
        <taxon>Euarchontoglires</taxon>
        <taxon>Glires</taxon>
        <taxon>Rodentia</taxon>
        <taxon>Myomorpha</taxon>
        <taxon>Muroidea</taxon>
        <taxon>Muridae</taxon>
        <taxon>Murinae</taxon>
        <taxon>Mus</taxon>
        <taxon>Mus</taxon>
    </lineage>
</organism>